<reference key="1">
    <citation type="journal article" date="2009" name="J. Bacteriol.">
        <title>Complete and draft genome sequences of six members of the Aquificales.</title>
        <authorList>
            <person name="Reysenbach A.-L."/>
            <person name="Hamamura N."/>
            <person name="Podar M."/>
            <person name="Griffiths E."/>
            <person name="Ferreira S."/>
            <person name="Hochstein R."/>
            <person name="Heidelberg J."/>
            <person name="Johnson J."/>
            <person name="Mead D."/>
            <person name="Pohorille A."/>
            <person name="Sarmiento M."/>
            <person name="Schweighofer K."/>
            <person name="Seshadri R."/>
            <person name="Voytek M.A."/>
        </authorList>
    </citation>
    <scope>NUCLEOTIDE SEQUENCE [LARGE SCALE GENOMIC DNA]</scope>
    <source>
        <strain>YO3AOP1</strain>
    </source>
</reference>
<organism>
    <name type="scientific">Sulfurihydrogenibium sp. (strain YO3AOP1)</name>
    <dbReference type="NCBI Taxonomy" id="436114"/>
    <lineage>
        <taxon>Bacteria</taxon>
        <taxon>Pseudomonadati</taxon>
        <taxon>Aquificota</taxon>
        <taxon>Aquificia</taxon>
        <taxon>Aquificales</taxon>
        <taxon>Hydrogenothermaceae</taxon>
        <taxon>Sulfurihydrogenibium</taxon>
    </lineage>
</organism>
<evidence type="ECO:0000255" key="1">
    <source>
        <dbReference type="HAMAP-Rule" id="MF_00368"/>
    </source>
</evidence>
<evidence type="ECO:0000305" key="2"/>
<name>RL7_SULSY</name>
<keyword id="KW-0687">Ribonucleoprotein</keyword>
<keyword id="KW-0689">Ribosomal protein</keyword>
<proteinExistence type="inferred from homology"/>
<protein>
    <recommendedName>
        <fullName evidence="1">Large ribosomal subunit protein bL12</fullName>
    </recommendedName>
    <alternativeName>
        <fullName evidence="2">50S ribosomal protein L7/L12</fullName>
    </alternativeName>
</protein>
<dbReference type="EMBL" id="CP001080">
    <property type="protein sequence ID" value="ACD65944.1"/>
    <property type="molecule type" value="Genomic_DNA"/>
</dbReference>
<dbReference type="RefSeq" id="WP_012459032.1">
    <property type="nucleotide sequence ID" value="NC_010730.1"/>
</dbReference>
<dbReference type="SMR" id="B2V7M1"/>
<dbReference type="STRING" id="436114.SYO3AOP1_0299"/>
<dbReference type="KEGG" id="sul:SYO3AOP1_0299"/>
<dbReference type="eggNOG" id="COG0222">
    <property type="taxonomic scope" value="Bacteria"/>
</dbReference>
<dbReference type="HOGENOM" id="CLU_086499_3_2_0"/>
<dbReference type="GO" id="GO:0022625">
    <property type="term" value="C:cytosolic large ribosomal subunit"/>
    <property type="evidence" value="ECO:0007669"/>
    <property type="project" value="TreeGrafter"/>
</dbReference>
<dbReference type="GO" id="GO:0003729">
    <property type="term" value="F:mRNA binding"/>
    <property type="evidence" value="ECO:0007669"/>
    <property type="project" value="TreeGrafter"/>
</dbReference>
<dbReference type="GO" id="GO:0003735">
    <property type="term" value="F:structural constituent of ribosome"/>
    <property type="evidence" value="ECO:0007669"/>
    <property type="project" value="InterPro"/>
</dbReference>
<dbReference type="GO" id="GO:0006412">
    <property type="term" value="P:translation"/>
    <property type="evidence" value="ECO:0007669"/>
    <property type="project" value="UniProtKB-UniRule"/>
</dbReference>
<dbReference type="CDD" id="cd00387">
    <property type="entry name" value="Ribosomal_L7_L12"/>
    <property type="match status" value="1"/>
</dbReference>
<dbReference type="FunFam" id="3.30.1390.10:FF:000001">
    <property type="entry name" value="50S ribosomal protein L7/L12"/>
    <property type="match status" value="1"/>
</dbReference>
<dbReference type="Gene3D" id="3.30.1390.10">
    <property type="match status" value="1"/>
</dbReference>
<dbReference type="Gene3D" id="1.20.5.710">
    <property type="entry name" value="Single helix bin"/>
    <property type="match status" value="1"/>
</dbReference>
<dbReference type="HAMAP" id="MF_00368">
    <property type="entry name" value="Ribosomal_bL12"/>
    <property type="match status" value="1"/>
</dbReference>
<dbReference type="InterPro" id="IPR000206">
    <property type="entry name" value="Ribosomal_bL12"/>
</dbReference>
<dbReference type="InterPro" id="IPR013823">
    <property type="entry name" value="Ribosomal_bL12_C"/>
</dbReference>
<dbReference type="InterPro" id="IPR014719">
    <property type="entry name" value="Ribosomal_bL12_C/ClpS-like"/>
</dbReference>
<dbReference type="InterPro" id="IPR008932">
    <property type="entry name" value="Ribosomal_bL12_oligo"/>
</dbReference>
<dbReference type="InterPro" id="IPR036235">
    <property type="entry name" value="Ribosomal_bL12_oligo_N_sf"/>
</dbReference>
<dbReference type="NCBIfam" id="TIGR00855">
    <property type="entry name" value="L12"/>
    <property type="match status" value="1"/>
</dbReference>
<dbReference type="PANTHER" id="PTHR45987">
    <property type="entry name" value="39S RIBOSOMAL PROTEIN L12"/>
    <property type="match status" value="1"/>
</dbReference>
<dbReference type="PANTHER" id="PTHR45987:SF4">
    <property type="entry name" value="LARGE RIBOSOMAL SUBUNIT PROTEIN BL12M"/>
    <property type="match status" value="1"/>
</dbReference>
<dbReference type="Pfam" id="PF00542">
    <property type="entry name" value="Ribosomal_L12"/>
    <property type="match status" value="1"/>
</dbReference>
<dbReference type="Pfam" id="PF16320">
    <property type="entry name" value="Ribosomal_L12_N"/>
    <property type="match status" value="1"/>
</dbReference>
<dbReference type="SUPFAM" id="SSF54736">
    <property type="entry name" value="ClpS-like"/>
    <property type="match status" value="1"/>
</dbReference>
<dbReference type="SUPFAM" id="SSF48300">
    <property type="entry name" value="Ribosomal protein L7/12, oligomerisation (N-terminal) domain"/>
    <property type="match status" value="1"/>
</dbReference>
<feature type="chain" id="PRO_1000121496" description="Large ribosomal subunit protein bL12">
    <location>
        <begin position="1"/>
        <end position="128"/>
    </location>
</feature>
<comment type="function">
    <text evidence="1">Forms part of the ribosomal stalk which helps the ribosome interact with GTP-bound translation factors. Is thus essential for accurate translation.</text>
</comment>
<comment type="subunit">
    <text evidence="1">Homodimer. Part of the ribosomal stalk of the 50S ribosomal subunit. Forms a multimeric L10(L12)X complex, where L10 forms an elongated spine to which 2 to 4 L12 dimers bind in a sequential fashion. Binds GTP-bound translation factors.</text>
</comment>
<comment type="similarity">
    <text evidence="1">Belongs to the bacterial ribosomal protein bL12 family.</text>
</comment>
<sequence>MATITREEIKEAIKSMTVLELAQLVKDLEEEFGVSAAAMVAAAPAAGGAAGAAAPAEEKTEFDVILTNAGANKINVIKVVREITGLGLKEAKDLVDGAPKPVKEGVSKDEAEQIKKKLEEAGATVEVK</sequence>
<gene>
    <name evidence="1" type="primary">rplL</name>
    <name type="ordered locus">SYO3AOP1_0299</name>
</gene>
<accession>B2V7M1</accession>